<protein>
    <recommendedName>
        <fullName>Nucleolar protein 16</fullName>
    </recommendedName>
</protein>
<sequence>MGNIRQAKKNRSSAPKQRMKRKGVLKSGKKKINVLGNAIIAENWDRKATLTQNYRRLGLMHRLNAPSGGSEKRKTENGLEEVASSLHIKGSVDAMKDSAISETLVERDPKTGKIIRVIRKDDEQVEIAGRKVRSSNPLNDPLNDLSDNEPEIKPQVKKAANQIVQQLEIQADNVAPKKPRHQSKREEEWITRLIEKHGDNYAAMARDRKLNPMQQTEGDLRRRINKWKIYTTIPSQYEVCFLILALWT</sequence>
<proteinExistence type="inferred from homology"/>
<organism>
    <name type="scientific">Emericella nidulans (strain FGSC A4 / ATCC 38163 / CBS 112.46 / NRRL 194 / M139)</name>
    <name type="common">Aspergillus nidulans</name>
    <dbReference type="NCBI Taxonomy" id="227321"/>
    <lineage>
        <taxon>Eukaryota</taxon>
        <taxon>Fungi</taxon>
        <taxon>Dikarya</taxon>
        <taxon>Ascomycota</taxon>
        <taxon>Pezizomycotina</taxon>
        <taxon>Eurotiomycetes</taxon>
        <taxon>Eurotiomycetidae</taxon>
        <taxon>Eurotiales</taxon>
        <taxon>Aspergillaceae</taxon>
        <taxon>Aspergillus</taxon>
        <taxon>Aspergillus subgen. Nidulantes</taxon>
    </lineage>
</organism>
<gene>
    <name type="primary">nop16</name>
    <name type="ORF">AN7674</name>
</gene>
<comment type="function">
    <text evidence="1">Involved in the biogenesis of the 60S ribosomal subunit.</text>
</comment>
<comment type="subunit">
    <text evidence="1">Component of the pre-66S ribosomal particle.</text>
</comment>
<comment type="subcellular location">
    <subcellularLocation>
        <location evidence="1">Nucleus</location>
        <location evidence="1">Nucleolus</location>
    </subcellularLocation>
</comment>
<comment type="similarity">
    <text evidence="3">Belongs to the NOP16 family.</text>
</comment>
<evidence type="ECO:0000250" key="1"/>
<evidence type="ECO:0000256" key="2">
    <source>
        <dbReference type="SAM" id="MobiDB-lite"/>
    </source>
</evidence>
<evidence type="ECO:0000305" key="3"/>
<keyword id="KW-0539">Nucleus</keyword>
<keyword id="KW-1185">Reference proteome</keyword>
<keyword id="KW-0687">Ribonucleoprotein</keyword>
<keyword id="KW-0690">Ribosome biogenesis</keyword>
<keyword id="KW-0698">rRNA processing</keyword>
<accession>Q5AVK6</accession>
<accession>C8VC32</accession>
<name>NOP16_EMENI</name>
<dbReference type="EMBL" id="AACD01000130">
    <property type="protein sequence ID" value="EAA61860.1"/>
    <property type="molecule type" value="Genomic_DNA"/>
</dbReference>
<dbReference type="EMBL" id="BN001304">
    <property type="protein sequence ID" value="CBF79877.1"/>
    <property type="molecule type" value="Genomic_DNA"/>
</dbReference>
<dbReference type="RefSeq" id="XP_680943.1">
    <property type="nucleotide sequence ID" value="XM_675851.1"/>
</dbReference>
<dbReference type="SMR" id="Q5AVK6"/>
<dbReference type="FunCoup" id="Q5AVK6">
    <property type="interactions" value="254"/>
</dbReference>
<dbReference type="STRING" id="227321.Q5AVK6"/>
<dbReference type="EnsemblFungi" id="CBF79877">
    <property type="protein sequence ID" value="CBF79877"/>
    <property type="gene ID" value="ANIA_07674"/>
</dbReference>
<dbReference type="KEGG" id="ani:ANIA_07674"/>
<dbReference type="VEuPathDB" id="FungiDB:AN7674"/>
<dbReference type="eggNOG" id="KOG4771">
    <property type="taxonomic scope" value="Eukaryota"/>
</dbReference>
<dbReference type="HOGENOM" id="CLU_078857_0_0_1"/>
<dbReference type="InParanoid" id="Q5AVK6"/>
<dbReference type="OMA" id="MQQTEAD"/>
<dbReference type="OrthoDB" id="285729at2759"/>
<dbReference type="Proteomes" id="UP000000560">
    <property type="component" value="Chromosome IV"/>
</dbReference>
<dbReference type="GO" id="GO:0005730">
    <property type="term" value="C:nucleolus"/>
    <property type="evidence" value="ECO:0000318"/>
    <property type="project" value="GO_Central"/>
</dbReference>
<dbReference type="GO" id="GO:1990904">
    <property type="term" value="C:ribonucleoprotein complex"/>
    <property type="evidence" value="ECO:0007669"/>
    <property type="project" value="UniProtKB-KW"/>
</dbReference>
<dbReference type="GO" id="GO:0042273">
    <property type="term" value="P:ribosomal large subunit biogenesis"/>
    <property type="evidence" value="ECO:0000318"/>
    <property type="project" value="GO_Central"/>
</dbReference>
<dbReference type="GO" id="GO:0006364">
    <property type="term" value="P:rRNA processing"/>
    <property type="evidence" value="ECO:0007669"/>
    <property type="project" value="UniProtKB-KW"/>
</dbReference>
<dbReference type="InterPro" id="IPR019002">
    <property type="entry name" value="Ribosome_biogenesis_Nop16"/>
</dbReference>
<dbReference type="PANTHER" id="PTHR13243">
    <property type="entry name" value="HSPC111 PROTEIN-RELATED"/>
    <property type="match status" value="1"/>
</dbReference>
<dbReference type="PANTHER" id="PTHR13243:SF1">
    <property type="entry name" value="NUCLEOLAR PROTEIN 16"/>
    <property type="match status" value="1"/>
</dbReference>
<dbReference type="Pfam" id="PF09420">
    <property type="entry name" value="Nop16"/>
    <property type="match status" value="1"/>
</dbReference>
<feature type="chain" id="PRO_0000320376" description="Nucleolar protein 16">
    <location>
        <begin position="1"/>
        <end position="248"/>
    </location>
</feature>
<feature type="region of interest" description="Disordered" evidence="2">
    <location>
        <begin position="1"/>
        <end position="27"/>
    </location>
</feature>
<reference key="1">
    <citation type="journal article" date="2005" name="Nature">
        <title>Sequencing of Aspergillus nidulans and comparative analysis with A. fumigatus and A. oryzae.</title>
        <authorList>
            <person name="Galagan J.E."/>
            <person name="Calvo S.E."/>
            <person name="Cuomo C."/>
            <person name="Ma L.-J."/>
            <person name="Wortman J.R."/>
            <person name="Batzoglou S."/>
            <person name="Lee S.-I."/>
            <person name="Bastuerkmen M."/>
            <person name="Spevak C.C."/>
            <person name="Clutterbuck J."/>
            <person name="Kapitonov V."/>
            <person name="Jurka J."/>
            <person name="Scazzocchio C."/>
            <person name="Farman M.L."/>
            <person name="Butler J."/>
            <person name="Purcell S."/>
            <person name="Harris S."/>
            <person name="Braus G.H."/>
            <person name="Draht O."/>
            <person name="Busch S."/>
            <person name="D'Enfert C."/>
            <person name="Bouchier C."/>
            <person name="Goldman G.H."/>
            <person name="Bell-Pedersen D."/>
            <person name="Griffiths-Jones S."/>
            <person name="Doonan J.H."/>
            <person name="Yu J."/>
            <person name="Vienken K."/>
            <person name="Pain A."/>
            <person name="Freitag M."/>
            <person name="Selker E.U."/>
            <person name="Archer D.B."/>
            <person name="Penalva M.A."/>
            <person name="Oakley B.R."/>
            <person name="Momany M."/>
            <person name="Tanaka T."/>
            <person name="Kumagai T."/>
            <person name="Asai K."/>
            <person name="Machida M."/>
            <person name="Nierman W.C."/>
            <person name="Denning D.W."/>
            <person name="Caddick M.X."/>
            <person name="Hynes M."/>
            <person name="Paoletti M."/>
            <person name="Fischer R."/>
            <person name="Miller B.L."/>
            <person name="Dyer P.S."/>
            <person name="Sachs M.S."/>
            <person name="Osmani S.A."/>
            <person name="Birren B.W."/>
        </authorList>
    </citation>
    <scope>NUCLEOTIDE SEQUENCE [LARGE SCALE GENOMIC DNA]</scope>
    <source>
        <strain>FGSC A4 / ATCC 38163 / CBS 112.46 / NRRL 194 / M139</strain>
    </source>
</reference>
<reference key="2">
    <citation type="journal article" date="2009" name="Fungal Genet. Biol.">
        <title>The 2008 update of the Aspergillus nidulans genome annotation: a community effort.</title>
        <authorList>
            <person name="Wortman J.R."/>
            <person name="Gilsenan J.M."/>
            <person name="Joardar V."/>
            <person name="Deegan J."/>
            <person name="Clutterbuck J."/>
            <person name="Andersen M.R."/>
            <person name="Archer D."/>
            <person name="Bencina M."/>
            <person name="Braus G."/>
            <person name="Coutinho P."/>
            <person name="von Dohren H."/>
            <person name="Doonan J."/>
            <person name="Driessen A.J."/>
            <person name="Durek P."/>
            <person name="Espeso E."/>
            <person name="Fekete E."/>
            <person name="Flipphi M."/>
            <person name="Estrada C.G."/>
            <person name="Geysens S."/>
            <person name="Goldman G."/>
            <person name="de Groot P.W."/>
            <person name="Hansen K."/>
            <person name="Harris S.D."/>
            <person name="Heinekamp T."/>
            <person name="Helmstaedt K."/>
            <person name="Henrissat B."/>
            <person name="Hofmann G."/>
            <person name="Homan T."/>
            <person name="Horio T."/>
            <person name="Horiuchi H."/>
            <person name="James S."/>
            <person name="Jones M."/>
            <person name="Karaffa L."/>
            <person name="Karanyi Z."/>
            <person name="Kato M."/>
            <person name="Keller N."/>
            <person name="Kelly D.E."/>
            <person name="Kiel J.A."/>
            <person name="Kim J.M."/>
            <person name="van der Klei I.J."/>
            <person name="Klis F.M."/>
            <person name="Kovalchuk A."/>
            <person name="Krasevec N."/>
            <person name="Kubicek C.P."/>
            <person name="Liu B."/>
            <person name="Maccabe A."/>
            <person name="Meyer V."/>
            <person name="Mirabito P."/>
            <person name="Miskei M."/>
            <person name="Mos M."/>
            <person name="Mullins J."/>
            <person name="Nelson D.R."/>
            <person name="Nielsen J."/>
            <person name="Oakley B.R."/>
            <person name="Osmani S.A."/>
            <person name="Pakula T."/>
            <person name="Paszewski A."/>
            <person name="Paulsen I."/>
            <person name="Pilsyk S."/>
            <person name="Pocsi I."/>
            <person name="Punt P.J."/>
            <person name="Ram A.F."/>
            <person name="Ren Q."/>
            <person name="Robellet X."/>
            <person name="Robson G."/>
            <person name="Seiboth B."/>
            <person name="van Solingen P."/>
            <person name="Specht T."/>
            <person name="Sun J."/>
            <person name="Taheri-Talesh N."/>
            <person name="Takeshita N."/>
            <person name="Ussery D."/>
            <person name="vanKuyk P.A."/>
            <person name="Visser H."/>
            <person name="van de Vondervoort P.J."/>
            <person name="de Vries R.P."/>
            <person name="Walton J."/>
            <person name="Xiang X."/>
            <person name="Xiong Y."/>
            <person name="Zeng A.P."/>
            <person name="Brandt B.W."/>
            <person name="Cornell M.J."/>
            <person name="van den Hondel C.A."/>
            <person name="Visser J."/>
            <person name="Oliver S.G."/>
            <person name="Turner G."/>
        </authorList>
    </citation>
    <scope>GENOME REANNOTATION</scope>
    <source>
        <strain>FGSC A4 / ATCC 38163 / CBS 112.46 / NRRL 194 / M139</strain>
    </source>
</reference>